<organism>
    <name type="scientific">Legionella pneumophila (strain Lens)</name>
    <dbReference type="NCBI Taxonomy" id="297245"/>
    <lineage>
        <taxon>Bacteria</taxon>
        <taxon>Pseudomonadati</taxon>
        <taxon>Pseudomonadota</taxon>
        <taxon>Gammaproteobacteria</taxon>
        <taxon>Legionellales</taxon>
        <taxon>Legionellaceae</taxon>
        <taxon>Legionella</taxon>
    </lineage>
</organism>
<keyword id="KW-0687">Ribonucleoprotein</keyword>
<keyword id="KW-0689">Ribosomal protein</keyword>
<keyword id="KW-0694">RNA-binding</keyword>
<keyword id="KW-0699">rRNA-binding</keyword>
<reference key="1">
    <citation type="journal article" date="2004" name="Nat. Genet.">
        <title>Evidence in the Legionella pneumophila genome for exploitation of host cell functions and high genome plasticity.</title>
        <authorList>
            <person name="Cazalet C."/>
            <person name="Rusniok C."/>
            <person name="Brueggemann H."/>
            <person name="Zidane N."/>
            <person name="Magnier A."/>
            <person name="Ma L."/>
            <person name="Tichit M."/>
            <person name="Jarraud S."/>
            <person name="Bouchier C."/>
            <person name="Vandenesch F."/>
            <person name="Kunst F."/>
            <person name="Etienne J."/>
            <person name="Glaser P."/>
            <person name="Buchrieser C."/>
        </authorList>
    </citation>
    <scope>NUCLEOTIDE SEQUENCE [LARGE SCALE GENOMIC DNA]</scope>
    <source>
        <strain>Lens</strain>
    </source>
</reference>
<proteinExistence type="inferred from homology"/>
<protein>
    <recommendedName>
        <fullName evidence="1">Large ribosomal subunit protein bL25</fullName>
    </recommendedName>
    <alternativeName>
        <fullName evidence="3">50S ribosomal protein L25</fullName>
    </alternativeName>
    <alternativeName>
        <fullName evidence="1">General stress protein CTC</fullName>
    </alternativeName>
</protein>
<name>RL25_LEGPL</name>
<sequence>MSTIQLEAQSRTDMGKGASRRLRRLENKVPAVIYGGSKKPMAIHFSHNKVIKALETESIYSSVFDITVDGKVEHVILKALQRHPYKPIVLHMDLQRVSSKDILVKLVPVHFINEEQSPGIKAGGIVQHTMTQVEIRCQAKDLPEFIEVDMSKVGMDDVVHLSDLKLPKGVQLTVDVADGSHDAPVVSIHAAKVSSTELEETPEVPASAVPTTDQGESAE</sequence>
<feature type="chain" id="PRO_0000181559" description="Large ribosomal subunit protein bL25">
    <location>
        <begin position="1"/>
        <end position="219"/>
    </location>
</feature>
<feature type="region of interest" description="Disordered" evidence="2">
    <location>
        <begin position="194"/>
        <end position="219"/>
    </location>
</feature>
<feature type="compositionally biased region" description="Polar residues" evidence="2">
    <location>
        <begin position="209"/>
        <end position="219"/>
    </location>
</feature>
<gene>
    <name evidence="1" type="primary">rplY</name>
    <name evidence="1" type="synonym">ctc</name>
    <name type="ordered locus">lpl2577</name>
</gene>
<dbReference type="EMBL" id="CR628337">
    <property type="protein sequence ID" value="CAH16818.1"/>
    <property type="molecule type" value="Genomic_DNA"/>
</dbReference>
<dbReference type="RefSeq" id="WP_010948352.1">
    <property type="nucleotide sequence ID" value="NC_006369.1"/>
</dbReference>
<dbReference type="SMR" id="Q5WTE8"/>
<dbReference type="KEGG" id="lpf:lpl2577"/>
<dbReference type="LegioList" id="lpl2577"/>
<dbReference type="HOGENOM" id="CLU_075939_0_1_6"/>
<dbReference type="Proteomes" id="UP000002517">
    <property type="component" value="Chromosome"/>
</dbReference>
<dbReference type="GO" id="GO:0022625">
    <property type="term" value="C:cytosolic large ribosomal subunit"/>
    <property type="evidence" value="ECO:0007669"/>
    <property type="project" value="TreeGrafter"/>
</dbReference>
<dbReference type="GO" id="GO:0008097">
    <property type="term" value="F:5S rRNA binding"/>
    <property type="evidence" value="ECO:0007669"/>
    <property type="project" value="InterPro"/>
</dbReference>
<dbReference type="GO" id="GO:0003735">
    <property type="term" value="F:structural constituent of ribosome"/>
    <property type="evidence" value="ECO:0007669"/>
    <property type="project" value="InterPro"/>
</dbReference>
<dbReference type="GO" id="GO:0006412">
    <property type="term" value="P:translation"/>
    <property type="evidence" value="ECO:0007669"/>
    <property type="project" value="UniProtKB-UniRule"/>
</dbReference>
<dbReference type="CDD" id="cd00495">
    <property type="entry name" value="Ribosomal_L25_TL5_CTC"/>
    <property type="match status" value="1"/>
</dbReference>
<dbReference type="FunFam" id="2.40.240.10:FF:000002">
    <property type="entry name" value="50S ribosomal protein L25"/>
    <property type="match status" value="1"/>
</dbReference>
<dbReference type="Gene3D" id="2.170.120.20">
    <property type="entry name" value="Ribosomal protein L25, beta domain"/>
    <property type="match status" value="1"/>
</dbReference>
<dbReference type="Gene3D" id="2.40.240.10">
    <property type="entry name" value="Ribosomal Protein L25, Chain P"/>
    <property type="match status" value="1"/>
</dbReference>
<dbReference type="HAMAP" id="MF_01334">
    <property type="entry name" value="Ribosomal_bL25_CTC"/>
    <property type="match status" value="1"/>
</dbReference>
<dbReference type="InterPro" id="IPR020056">
    <property type="entry name" value="Rbsml_bL25/Gln-tRNA_synth_N"/>
</dbReference>
<dbReference type="InterPro" id="IPR011035">
    <property type="entry name" value="Ribosomal_bL25/Gln-tRNA_synth"/>
</dbReference>
<dbReference type="InterPro" id="IPR020057">
    <property type="entry name" value="Ribosomal_bL25_b-dom"/>
</dbReference>
<dbReference type="InterPro" id="IPR037121">
    <property type="entry name" value="Ribosomal_bL25_C"/>
</dbReference>
<dbReference type="InterPro" id="IPR001021">
    <property type="entry name" value="Ribosomal_bL25_long"/>
</dbReference>
<dbReference type="InterPro" id="IPR029751">
    <property type="entry name" value="Ribosomal_L25_dom"/>
</dbReference>
<dbReference type="InterPro" id="IPR020930">
    <property type="entry name" value="Ribosomal_uL5_bac-type"/>
</dbReference>
<dbReference type="NCBIfam" id="TIGR00731">
    <property type="entry name" value="bL25_bact_ctc"/>
    <property type="match status" value="1"/>
</dbReference>
<dbReference type="NCBIfam" id="NF004128">
    <property type="entry name" value="PRK05618.1-2"/>
    <property type="match status" value="1"/>
</dbReference>
<dbReference type="NCBIfam" id="NF004130">
    <property type="entry name" value="PRK05618.1-5"/>
    <property type="match status" value="1"/>
</dbReference>
<dbReference type="NCBIfam" id="NF004612">
    <property type="entry name" value="PRK05943.1"/>
    <property type="match status" value="1"/>
</dbReference>
<dbReference type="PANTHER" id="PTHR33284">
    <property type="entry name" value="RIBOSOMAL PROTEIN L25/GLN-TRNA SYNTHETASE, ANTI-CODON-BINDING DOMAIN-CONTAINING PROTEIN"/>
    <property type="match status" value="1"/>
</dbReference>
<dbReference type="PANTHER" id="PTHR33284:SF1">
    <property type="entry name" value="RIBOSOMAL PROTEIN L25_GLN-TRNA SYNTHETASE, ANTI-CODON-BINDING DOMAIN-CONTAINING PROTEIN"/>
    <property type="match status" value="1"/>
</dbReference>
<dbReference type="Pfam" id="PF01386">
    <property type="entry name" value="Ribosomal_L25p"/>
    <property type="match status" value="1"/>
</dbReference>
<dbReference type="Pfam" id="PF14693">
    <property type="entry name" value="Ribosomal_TL5_C"/>
    <property type="match status" value="1"/>
</dbReference>
<dbReference type="SUPFAM" id="SSF50715">
    <property type="entry name" value="Ribosomal protein L25-like"/>
    <property type="match status" value="1"/>
</dbReference>
<accession>Q5WTE8</accession>
<comment type="function">
    <text evidence="1">This is one of the proteins that binds to the 5S RNA in the ribosome where it forms part of the central protuberance.</text>
</comment>
<comment type="subunit">
    <text evidence="1">Part of the 50S ribosomal subunit; part of the 5S rRNA/L5/L18/L25 subcomplex. Contacts the 5S rRNA. Binds to the 5S rRNA independently of L5 and L18.</text>
</comment>
<comment type="similarity">
    <text evidence="1">Belongs to the bacterial ribosomal protein bL25 family. CTC subfamily.</text>
</comment>
<evidence type="ECO:0000255" key="1">
    <source>
        <dbReference type="HAMAP-Rule" id="MF_01334"/>
    </source>
</evidence>
<evidence type="ECO:0000256" key="2">
    <source>
        <dbReference type="SAM" id="MobiDB-lite"/>
    </source>
</evidence>
<evidence type="ECO:0000305" key="3"/>